<feature type="chain" id="PRO_0000163543" description="Large ribosomal subunit protein bL19">
    <location>
        <begin position="1"/>
        <end position="115"/>
    </location>
</feature>
<reference key="1">
    <citation type="journal article" date="2001" name="J. Bacteriol.">
        <title>Genome of the bacterium Streptococcus pneumoniae strain R6.</title>
        <authorList>
            <person name="Hoskins J."/>
            <person name="Alborn W.E. Jr."/>
            <person name="Arnold J."/>
            <person name="Blaszczak L.C."/>
            <person name="Burgett S."/>
            <person name="DeHoff B.S."/>
            <person name="Estrem S.T."/>
            <person name="Fritz L."/>
            <person name="Fu D.-J."/>
            <person name="Fuller W."/>
            <person name="Geringer C."/>
            <person name="Gilmour R."/>
            <person name="Glass J.S."/>
            <person name="Khoja H."/>
            <person name="Kraft A.R."/>
            <person name="Lagace R.E."/>
            <person name="LeBlanc D.J."/>
            <person name="Lee L.N."/>
            <person name="Lefkowitz E.J."/>
            <person name="Lu J."/>
            <person name="Matsushima P."/>
            <person name="McAhren S.M."/>
            <person name="McHenney M."/>
            <person name="McLeaster K."/>
            <person name="Mundy C.W."/>
            <person name="Nicas T.I."/>
            <person name="Norris F.H."/>
            <person name="O'Gara M."/>
            <person name="Peery R.B."/>
            <person name="Robertson G.T."/>
            <person name="Rockey P."/>
            <person name="Sun P.-M."/>
            <person name="Winkler M.E."/>
            <person name="Yang Y."/>
            <person name="Young-Bellido M."/>
            <person name="Zhao G."/>
            <person name="Zook C.A."/>
            <person name="Baltz R.H."/>
            <person name="Jaskunas S.R."/>
            <person name="Rosteck P.R. Jr."/>
            <person name="Skatrud P.L."/>
            <person name="Glass J.I."/>
        </authorList>
    </citation>
    <scope>NUCLEOTIDE SEQUENCE [LARGE SCALE GENOMIC DNA]</scope>
    <source>
        <strain>ATCC BAA-255 / R6</strain>
    </source>
</reference>
<sequence>MNPLIQSLTEGQLRTDIPSFRPGDTVRVHAKVVEGNRERIQIFEGVVIARKGAGISENYTVRKISNGIGVERIFPIHTPRVEKIEVVRYGKVRRAKLYYLRALQGKAARIKEIRR</sequence>
<organism>
    <name type="scientific">Streptococcus pneumoniae (strain ATCC BAA-255 / R6)</name>
    <dbReference type="NCBI Taxonomy" id="171101"/>
    <lineage>
        <taxon>Bacteria</taxon>
        <taxon>Bacillati</taxon>
        <taxon>Bacillota</taxon>
        <taxon>Bacilli</taxon>
        <taxon>Lactobacillales</taxon>
        <taxon>Streptococcaceae</taxon>
        <taxon>Streptococcus</taxon>
    </lineage>
</organism>
<name>RL19_STRR6</name>
<gene>
    <name evidence="1" type="primary">rplS</name>
    <name type="ordered locus">spr1171</name>
</gene>
<dbReference type="EMBL" id="AE007317">
    <property type="protein sequence ID" value="AAK99974.1"/>
    <property type="molecule type" value="Genomic_DNA"/>
</dbReference>
<dbReference type="PIR" id="B98018">
    <property type="entry name" value="B98018"/>
</dbReference>
<dbReference type="RefSeq" id="NP_358764.1">
    <property type="nucleotide sequence ID" value="NC_003098.1"/>
</dbReference>
<dbReference type="RefSeq" id="WP_001068668.1">
    <property type="nucleotide sequence ID" value="NC_003098.1"/>
</dbReference>
<dbReference type="SMR" id="Q8CWQ9"/>
<dbReference type="STRING" id="171101.spr1171"/>
<dbReference type="KEGG" id="spr:spr1171"/>
<dbReference type="PATRIC" id="fig|171101.6.peg.1269"/>
<dbReference type="eggNOG" id="COG0335">
    <property type="taxonomic scope" value="Bacteria"/>
</dbReference>
<dbReference type="HOGENOM" id="CLU_103507_2_1_9"/>
<dbReference type="PRO" id="PR:Q8CWQ9"/>
<dbReference type="Proteomes" id="UP000000586">
    <property type="component" value="Chromosome"/>
</dbReference>
<dbReference type="GO" id="GO:0022625">
    <property type="term" value="C:cytosolic large ribosomal subunit"/>
    <property type="evidence" value="ECO:0000318"/>
    <property type="project" value="GO_Central"/>
</dbReference>
<dbReference type="GO" id="GO:0003735">
    <property type="term" value="F:structural constituent of ribosome"/>
    <property type="evidence" value="ECO:0000318"/>
    <property type="project" value="GO_Central"/>
</dbReference>
<dbReference type="GO" id="GO:0006412">
    <property type="term" value="P:translation"/>
    <property type="evidence" value="ECO:0007669"/>
    <property type="project" value="UniProtKB-UniRule"/>
</dbReference>
<dbReference type="FunFam" id="2.30.30.790:FF:000001">
    <property type="entry name" value="50S ribosomal protein L19"/>
    <property type="match status" value="1"/>
</dbReference>
<dbReference type="Gene3D" id="2.30.30.790">
    <property type="match status" value="1"/>
</dbReference>
<dbReference type="HAMAP" id="MF_00402">
    <property type="entry name" value="Ribosomal_bL19"/>
    <property type="match status" value="1"/>
</dbReference>
<dbReference type="InterPro" id="IPR001857">
    <property type="entry name" value="Ribosomal_bL19"/>
</dbReference>
<dbReference type="InterPro" id="IPR018257">
    <property type="entry name" value="Ribosomal_bL19_CS"/>
</dbReference>
<dbReference type="InterPro" id="IPR038657">
    <property type="entry name" value="Ribosomal_bL19_sf"/>
</dbReference>
<dbReference type="InterPro" id="IPR008991">
    <property type="entry name" value="Translation_prot_SH3-like_sf"/>
</dbReference>
<dbReference type="NCBIfam" id="TIGR01024">
    <property type="entry name" value="rplS_bact"/>
    <property type="match status" value="1"/>
</dbReference>
<dbReference type="PANTHER" id="PTHR15680:SF9">
    <property type="entry name" value="LARGE RIBOSOMAL SUBUNIT PROTEIN BL19M"/>
    <property type="match status" value="1"/>
</dbReference>
<dbReference type="PANTHER" id="PTHR15680">
    <property type="entry name" value="RIBOSOMAL PROTEIN L19"/>
    <property type="match status" value="1"/>
</dbReference>
<dbReference type="Pfam" id="PF01245">
    <property type="entry name" value="Ribosomal_L19"/>
    <property type="match status" value="1"/>
</dbReference>
<dbReference type="PIRSF" id="PIRSF002191">
    <property type="entry name" value="Ribosomal_L19"/>
    <property type="match status" value="1"/>
</dbReference>
<dbReference type="PRINTS" id="PR00061">
    <property type="entry name" value="RIBOSOMALL19"/>
</dbReference>
<dbReference type="SUPFAM" id="SSF50104">
    <property type="entry name" value="Translation proteins SH3-like domain"/>
    <property type="match status" value="1"/>
</dbReference>
<dbReference type="PROSITE" id="PS01015">
    <property type="entry name" value="RIBOSOMAL_L19"/>
    <property type="match status" value="1"/>
</dbReference>
<proteinExistence type="inferred from homology"/>
<evidence type="ECO:0000255" key="1">
    <source>
        <dbReference type="HAMAP-Rule" id="MF_00402"/>
    </source>
</evidence>
<evidence type="ECO:0000305" key="2"/>
<accession>Q8CWQ9</accession>
<protein>
    <recommendedName>
        <fullName evidence="1">Large ribosomal subunit protein bL19</fullName>
    </recommendedName>
    <alternativeName>
        <fullName evidence="2">50S ribosomal protein L19</fullName>
    </alternativeName>
</protein>
<keyword id="KW-1185">Reference proteome</keyword>
<keyword id="KW-0687">Ribonucleoprotein</keyword>
<keyword id="KW-0689">Ribosomal protein</keyword>
<comment type="function">
    <text evidence="1">This protein is located at the 30S-50S ribosomal subunit interface and may play a role in the structure and function of the aminoacyl-tRNA binding site.</text>
</comment>
<comment type="similarity">
    <text evidence="1">Belongs to the bacterial ribosomal protein bL19 family.</text>
</comment>